<proteinExistence type="inferred from homology"/>
<name>RIMP_SALDC</name>
<protein>
    <recommendedName>
        <fullName evidence="1">Ribosome maturation factor RimP</fullName>
    </recommendedName>
</protein>
<accession>B5FI15</accession>
<keyword id="KW-0963">Cytoplasm</keyword>
<keyword id="KW-0690">Ribosome biogenesis</keyword>
<comment type="function">
    <text evidence="1">Required for maturation of 30S ribosomal subunits.</text>
</comment>
<comment type="subcellular location">
    <subcellularLocation>
        <location evidence="1">Cytoplasm</location>
    </subcellularLocation>
</comment>
<comment type="similarity">
    <text evidence="1">Belongs to the RimP family.</text>
</comment>
<feature type="chain" id="PRO_0000384759" description="Ribosome maturation factor RimP">
    <location>
        <begin position="1"/>
        <end position="150"/>
    </location>
</feature>
<reference key="1">
    <citation type="journal article" date="2011" name="J. Bacteriol.">
        <title>Comparative genomics of 28 Salmonella enterica isolates: evidence for CRISPR-mediated adaptive sublineage evolution.</title>
        <authorList>
            <person name="Fricke W.F."/>
            <person name="Mammel M.K."/>
            <person name="McDermott P.F."/>
            <person name="Tartera C."/>
            <person name="White D.G."/>
            <person name="Leclerc J.E."/>
            <person name="Ravel J."/>
            <person name="Cebula T.A."/>
        </authorList>
    </citation>
    <scope>NUCLEOTIDE SEQUENCE [LARGE SCALE GENOMIC DNA]</scope>
    <source>
        <strain>CT_02021853</strain>
    </source>
</reference>
<sequence>MSTLEQKLTEMITAPVEALGYELVGIEFIRGRTSTLRIYIDSEDGINVDDCADVSHQVSAVLDVEDPISVAYNLEVSSPGLDRPMFTADHYARFQGEEVALVLRMAVQNRRKWQGIIKAVDGEMITVTVEGKDEVFALSNIQKANLVPHF</sequence>
<organism>
    <name type="scientific">Salmonella dublin (strain CT_02021853)</name>
    <dbReference type="NCBI Taxonomy" id="439851"/>
    <lineage>
        <taxon>Bacteria</taxon>
        <taxon>Pseudomonadati</taxon>
        <taxon>Pseudomonadota</taxon>
        <taxon>Gammaproteobacteria</taxon>
        <taxon>Enterobacterales</taxon>
        <taxon>Enterobacteriaceae</taxon>
        <taxon>Salmonella</taxon>
    </lineage>
</organism>
<evidence type="ECO:0000255" key="1">
    <source>
        <dbReference type="HAMAP-Rule" id="MF_01077"/>
    </source>
</evidence>
<gene>
    <name evidence="1" type="primary">rimP</name>
    <name type="ordered locus">SeD_A3645</name>
</gene>
<dbReference type="EMBL" id="CP001144">
    <property type="protein sequence ID" value="ACH77273.1"/>
    <property type="molecule type" value="Genomic_DNA"/>
</dbReference>
<dbReference type="RefSeq" id="WP_000105461.1">
    <property type="nucleotide sequence ID" value="NC_011205.1"/>
</dbReference>
<dbReference type="SMR" id="B5FI15"/>
<dbReference type="KEGG" id="sed:SeD_A3645"/>
<dbReference type="HOGENOM" id="CLU_070525_1_1_6"/>
<dbReference type="Proteomes" id="UP000008322">
    <property type="component" value="Chromosome"/>
</dbReference>
<dbReference type="GO" id="GO:0005829">
    <property type="term" value="C:cytosol"/>
    <property type="evidence" value="ECO:0007669"/>
    <property type="project" value="TreeGrafter"/>
</dbReference>
<dbReference type="GO" id="GO:0000028">
    <property type="term" value="P:ribosomal small subunit assembly"/>
    <property type="evidence" value="ECO:0007669"/>
    <property type="project" value="TreeGrafter"/>
</dbReference>
<dbReference type="GO" id="GO:0006412">
    <property type="term" value="P:translation"/>
    <property type="evidence" value="ECO:0007669"/>
    <property type="project" value="TreeGrafter"/>
</dbReference>
<dbReference type="CDD" id="cd01734">
    <property type="entry name" value="YlxS_C"/>
    <property type="match status" value="1"/>
</dbReference>
<dbReference type="FunFam" id="2.30.30.180:FF:000001">
    <property type="entry name" value="Ribosome maturation factor RimP"/>
    <property type="match status" value="1"/>
</dbReference>
<dbReference type="FunFam" id="3.30.300.70:FF:000001">
    <property type="entry name" value="Ribosome maturation factor RimP"/>
    <property type="match status" value="1"/>
</dbReference>
<dbReference type="Gene3D" id="2.30.30.180">
    <property type="entry name" value="Ribosome maturation factor RimP, C-terminal domain"/>
    <property type="match status" value="1"/>
</dbReference>
<dbReference type="Gene3D" id="3.30.300.70">
    <property type="entry name" value="RimP-like superfamily, N-terminal"/>
    <property type="match status" value="1"/>
</dbReference>
<dbReference type="HAMAP" id="MF_01077">
    <property type="entry name" value="RimP"/>
    <property type="match status" value="1"/>
</dbReference>
<dbReference type="InterPro" id="IPR003728">
    <property type="entry name" value="Ribosome_maturation_RimP"/>
</dbReference>
<dbReference type="InterPro" id="IPR028998">
    <property type="entry name" value="RimP_C"/>
</dbReference>
<dbReference type="InterPro" id="IPR036847">
    <property type="entry name" value="RimP_C_sf"/>
</dbReference>
<dbReference type="InterPro" id="IPR028989">
    <property type="entry name" value="RimP_N"/>
</dbReference>
<dbReference type="InterPro" id="IPR035956">
    <property type="entry name" value="RimP_N_sf"/>
</dbReference>
<dbReference type="NCBIfam" id="NF000927">
    <property type="entry name" value="PRK00092.1-1"/>
    <property type="match status" value="1"/>
</dbReference>
<dbReference type="PANTHER" id="PTHR33867">
    <property type="entry name" value="RIBOSOME MATURATION FACTOR RIMP"/>
    <property type="match status" value="1"/>
</dbReference>
<dbReference type="PANTHER" id="PTHR33867:SF1">
    <property type="entry name" value="RIBOSOME MATURATION FACTOR RIMP"/>
    <property type="match status" value="1"/>
</dbReference>
<dbReference type="Pfam" id="PF17384">
    <property type="entry name" value="DUF150_C"/>
    <property type="match status" value="1"/>
</dbReference>
<dbReference type="Pfam" id="PF02576">
    <property type="entry name" value="RimP_N"/>
    <property type="match status" value="1"/>
</dbReference>
<dbReference type="SUPFAM" id="SSF74942">
    <property type="entry name" value="YhbC-like, C-terminal domain"/>
    <property type="match status" value="1"/>
</dbReference>
<dbReference type="SUPFAM" id="SSF75420">
    <property type="entry name" value="YhbC-like, N-terminal domain"/>
    <property type="match status" value="1"/>
</dbReference>